<feature type="chain" id="PRO_0000260619" description="Ribosomal RNA large subunit methyltransferase H">
    <location>
        <begin position="1"/>
        <end position="159"/>
    </location>
</feature>
<feature type="binding site" evidence="1">
    <location>
        <position position="76"/>
    </location>
    <ligand>
        <name>S-adenosyl-L-methionine</name>
        <dbReference type="ChEBI" id="CHEBI:59789"/>
    </ligand>
</feature>
<feature type="binding site" evidence="1">
    <location>
        <position position="108"/>
    </location>
    <ligand>
        <name>S-adenosyl-L-methionine</name>
        <dbReference type="ChEBI" id="CHEBI:59789"/>
    </ligand>
</feature>
<feature type="binding site" evidence="1">
    <location>
        <begin position="127"/>
        <end position="132"/>
    </location>
    <ligand>
        <name>S-adenosyl-L-methionine</name>
        <dbReference type="ChEBI" id="CHEBI:59789"/>
    </ligand>
</feature>
<proteinExistence type="inferred from homology"/>
<dbReference type="EC" id="2.1.1.177" evidence="1"/>
<dbReference type="EMBL" id="CP000259">
    <property type="protein sequence ID" value="ABF33063.1"/>
    <property type="molecule type" value="Genomic_DNA"/>
</dbReference>
<dbReference type="RefSeq" id="WP_002981964.1">
    <property type="nucleotide sequence ID" value="NC_008021.1"/>
</dbReference>
<dbReference type="SMR" id="Q1JJB0"/>
<dbReference type="KEGG" id="spk:MGAS9429_Spy1876"/>
<dbReference type="HOGENOM" id="CLU_100552_0_0_9"/>
<dbReference type="Proteomes" id="UP000002433">
    <property type="component" value="Chromosome"/>
</dbReference>
<dbReference type="GO" id="GO:0005737">
    <property type="term" value="C:cytoplasm"/>
    <property type="evidence" value="ECO:0007669"/>
    <property type="project" value="UniProtKB-SubCell"/>
</dbReference>
<dbReference type="GO" id="GO:0070038">
    <property type="term" value="F:rRNA (pseudouridine-N3-)-methyltransferase activity"/>
    <property type="evidence" value="ECO:0007669"/>
    <property type="project" value="UniProtKB-UniRule"/>
</dbReference>
<dbReference type="CDD" id="cd18081">
    <property type="entry name" value="RlmH-like"/>
    <property type="match status" value="1"/>
</dbReference>
<dbReference type="Gene3D" id="3.40.1280.10">
    <property type="match status" value="1"/>
</dbReference>
<dbReference type="HAMAP" id="MF_00658">
    <property type="entry name" value="23SrRNA_methyltr_H"/>
    <property type="match status" value="1"/>
</dbReference>
<dbReference type="InterPro" id="IPR029028">
    <property type="entry name" value="Alpha/beta_knot_MTases"/>
</dbReference>
<dbReference type="InterPro" id="IPR003742">
    <property type="entry name" value="RlmH-like"/>
</dbReference>
<dbReference type="InterPro" id="IPR029026">
    <property type="entry name" value="tRNA_m1G_MTases_N"/>
</dbReference>
<dbReference type="NCBIfam" id="NF000985">
    <property type="entry name" value="PRK00103.1-3"/>
    <property type="match status" value="1"/>
</dbReference>
<dbReference type="NCBIfam" id="TIGR00246">
    <property type="entry name" value="tRNA_RlmH_YbeA"/>
    <property type="match status" value="1"/>
</dbReference>
<dbReference type="PANTHER" id="PTHR33603">
    <property type="entry name" value="METHYLTRANSFERASE"/>
    <property type="match status" value="1"/>
</dbReference>
<dbReference type="PANTHER" id="PTHR33603:SF1">
    <property type="entry name" value="RIBOSOMAL RNA LARGE SUBUNIT METHYLTRANSFERASE H"/>
    <property type="match status" value="1"/>
</dbReference>
<dbReference type="Pfam" id="PF02590">
    <property type="entry name" value="SPOUT_MTase"/>
    <property type="match status" value="1"/>
</dbReference>
<dbReference type="PIRSF" id="PIRSF004505">
    <property type="entry name" value="MT_bac"/>
    <property type="match status" value="1"/>
</dbReference>
<dbReference type="SUPFAM" id="SSF75217">
    <property type="entry name" value="alpha/beta knot"/>
    <property type="match status" value="1"/>
</dbReference>
<comment type="function">
    <text evidence="1">Specifically methylates the pseudouridine at position 1915 (m3Psi1915) in 23S rRNA.</text>
</comment>
<comment type="catalytic activity">
    <reaction evidence="1">
        <text>pseudouridine(1915) in 23S rRNA + S-adenosyl-L-methionine = N(3)-methylpseudouridine(1915) in 23S rRNA + S-adenosyl-L-homocysteine + H(+)</text>
        <dbReference type="Rhea" id="RHEA:42752"/>
        <dbReference type="Rhea" id="RHEA-COMP:10221"/>
        <dbReference type="Rhea" id="RHEA-COMP:10222"/>
        <dbReference type="ChEBI" id="CHEBI:15378"/>
        <dbReference type="ChEBI" id="CHEBI:57856"/>
        <dbReference type="ChEBI" id="CHEBI:59789"/>
        <dbReference type="ChEBI" id="CHEBI:65314"/>
        <dbReference type="ChEBI" id="CHEBI:74486"/>
        <dbReference type="EC" id="2.1.1.177"/>
    </reaction>
</comment>
<comment type="subunit">
    <text evidence="1">Homodimer.</text>
</comment>
<comment type="subcellular location">
    <subcellularLocation>
        <location evidence="1">Cytoplasm</location>
    </subcellularLocation>
</comment>
<comment type="similarity">
    <text evidence="1">Belongs to the RNA methyltransferase RlmH family.</text>
</comment>
<reference key="1">
    <citation type="journal article" date="2006" name="Proc. Natl. Acad. Sci. U.S.A.">
        <title>Molecular genetic anatomy of inter- and intraserotype variation in the human bacterial pathogen group A Streptococcus.</title>
        <authorList>
            <person name="Beres S.B."/>
            <person name="Richter E.W."/>
            <person name="Nagiec M.J."/>
            <person name="Sumby P."/>
            <person name="Porcella S.F."/>
            <person name="DeLeo F.R."/>
            <person name="Musser J.M."/>
        </authorList>
    </citation>
    <scope>NUCLEOTIDE SEQUENCE [LARGE SCALE GENOMIC DNA]</scope>
    <source>
        <strain>MGAS9429</strain>
    </source>
</reference>
<keyword id="KW-0963">Cytoplasm</keyword>
<keyword id="KW-0489">Methyltransferase</keyword>
<keyword id="KW-0698">rRNA processing</keyword>
<keyword id="KW-0949">S-adenosyl-L-methionine</keyword>
<keyword id="KW-0808">Transferase</keyword>
<sequence>MKVKLICVGKLKERYLKDGISEYQKRLSRFCQFEMIELTDERTPDKASFADNQLIMSKEAQRIHKKIGERDFVIALAIEGKQFPSETFSELISGVTVKGYSTITFIIGGSLGLDSIIKKRANMLMSFGLLTLPHQLMRLVLTEQIYRAFMITQGSPYHK</sequence>
<accession>Q1JJB0</accession>
<organism>
    <name type="scientific">Streptococcus pyogenes serotype M12 (strain MGAS9429)</name>
    <dbReference type="NCBI Taxonomy" id="370551"/>
    <lineage>
        <taxon>Bacteria</taxon>
        <taxon>Bacillati</taxon>
        <taxon>Bacillota</taxon>
        <taxon>Bacilli</taxon>
        <taxon>Lactobacillales</taxon>
        <taxon>Streptococcaceae</taxon>
        <taxon>Streptococcus</taxon>
    </lineage>
</organism>
<evidence type="ECO:0000255" key="1">
    <source>
        <dbReference type="HAMAP-Rule" id="MF_00658"/>
    </source>
</evidence>
<gene>
    <name evidence="1" type="primary">rlmH</name>
    <name type="ordered locus">MGAS9429_Spy1876</name>
</gene>
<name>RLMH_STRPC</name>
<protein>
    <recommendedName>
        <fullName evidence="1">Ribosomal RNA large subunit methyltransferase H</fullName>
        <ecNumber evidence="1">2.1.1.177</ecNumber>
    </recommendedName>
    <alternativeName>
        <fullName evidence="1">23S rRNA (pseudouridine1915-N3)-methyltransferase</fullName>
    </alternativeName>
    <alternativeName>
        <fullName evidence="1">23S rRNA m3Psi1915 methyltransferase</fullName>
    </alternativeName>
    <alternativeName>
        <fullName evidence="1">rRNA (pseudouridine-N3-)-methyltransferase RlmH</fullName>
    </alternativeName>
</protein>